<organism>
    <name type="scientific">Schizosaccharomyces pombe (strain 972 / ATCC 24843)</name>
    <name type="common">Fission yeast</name>
    <dbReference type="NCBI Taxonomy" id="284812"/>
    <lineage>
        <taxon>Eukaryota</taxon>
        <taxon>Fungi</taxon>
        <taxon>Dikarya</taxon>
        <taxon>Ascomycota</taxon>
        <taxon>Taphrinomycotina</taxon>
        <taxon>Schizosaccharomycetes</taxon>
        <taxon>Schizosaccharomycetales</taxon>
        <taxon>Schizosaccharomycetaceae</taxon>
        <taxon>Schizosaccharomyces</taxon>
    </lineage>
</organism>
<protein>
    <recommendedName>
        <fullName>Glutathione S-transferase 2</fullName>
        <ecNumber>2.5.1.18</ecNumber>
    </recommendedName>
    <alternativeName>
        <fullName>GST-II</fullName>
    </alternativeName>
</protein>
<accession>O59827</accession>
<sequence>MAHFTLYSHAGGPNPWKVVLALKELNLSYEQIFYDFQKGEQKCKEHLALNPNGRVPTLVDHKNNDYTIWESDAILIYLADKYDTDRKISLSFDDPEYYKLIQYLFFQASGQGVIWGQAGWFNFFHHEPVVSAVTRYRNEIKRVLGVLEDILKDRDYLVANKYTIADLSFIPWNYNLGGLFGEGKFSFKEEVPQLDFEKEFPKAYAWNQRLLARPAVKATFEELAKAKEQH</sequence>
<proteinExistence type="evidence at transcript level"/>
<keyword id="KW-1185">Reference proteome</keyword>
<keyword id="KW-0808">Transferase</keyword>
<feature type="chain" id="PRO_0000185985" description="Glutathione S-transferase 2">
    <location>
        <begin position="1"/>
        <end position="230"/>
    </location>
</feature>
<feature type="domain" description="GST N-terminal">
    <location>
        <begin position="2"/>
        <end position="86"/>
    </location>
</feature>
<feature type="domain" description="GST C-terminal">
    <location>
        <begin position="93"/>
        <end position="230"/>
    </location>
</feature>
<gene>
    <name type="primary">gst2</name>
    <name type="ORF">SPCC965.07c</name>
</gene>
<reference key="1">
    <citation type="journal article" date="2002" name="Biochim. Biophys. Acta">
        <title>A second stress-inducible glutathione S-transferase gene from Schizosaccharomyces pombe.</title>
        <authorList>
            <person name="Cho Y.-W."/>
            <person name="Park E.-H."/>
            <person name="Fuchs J.A."/>
            <person name="Lim C.-J."/>
        </authorList>
    </citation>
    <scope>NUCLEOTIDE SEQUENCE [GENOMIC DNA]</scope>
    <scope>FUNCTION</scope>
    <scope>INDUCTION</scope>
</reference>
<reference key="2">
    <citation type="journal article" date="2002" name="Nature">
        <title>The genome sequence of Schizosaccharomyces pombe.</title>
        <authorList>
            <person name="Wood V."/>
            <person name="Gwilliam R."/>
            <person name="Rajandream M.A."/>
            <person name="Lyne M.H."/>
            <person name="Lyne R."/>
            <person name="Stewart A."/>
            <person name="Sgouros J.G."/>
            <person name="Peat N."/>
            <person name="Hayles J."/>
            <person name="Baker S.G."/>
            <person name="Basham D."/>
            <person name="Bowman S."/>
            <person name="Brooks K."/>
            <person name="Brown D."/>
            <person name="Brown S."/>
            <person name="Chillingworth T."/>
            <person name="Churcher C.M."/>
            <person name="Collins M."/>
            <person name="Connor R."/>
            <person name="Cronin A."/>
            <person name="Davis P."/>
            <person name="Feltwell T."/>
            <person name="Fraser A."/>
            <person name="Gentles S."/>
            <person name="Goble A."/>
            <person name="Hamlin N."/>
            <person name="Harris D.E."/>
            <person name="Hidalgo J."/>
            <person name="Hodgson G."/>
            <person name="Holroyd S."/>
            <person name="Hornsby T."/>
            <person name="Howarth S."/>
            <person name="Huckle E.J."/>
            <person name="Hunt S."/>
            <person name="Jagels K."/>
            <person name="James K.D."/>
            <person name="Jones L."/>
            <person name="Jones M."/>
            <person name="Leather S."/>
            <person name="McDonald S."/>
            <person name="McLean J."/>
            <person name="Mooney P."/>
            <person name="Moule S."/>
            <person name="Mungall K.L."/>
            <person name="Murphy L.D."/>
            <person name="Niblett D."/>
            <person name="Odell C."/>
            <person name="Oliver K."/>
            <person name="O'Neil S."/>
            <person name="Pearson D."/>
            <person name="Quail M.A."/>
            <person name="Rabbinowitsch E."/>
            <person name="Rutherford K.M."/>
            <person name="Rutter S."/>
            <person name="Saunders D."/>
            <person name="Seeger K."/>
            <person name="Sharp S."/>
            <person name="Skelton J."/>
            <person name="Simmonds M.N."/>
            <person name="Squares R."/>
            <person name="Squares S."/>
            <person name="Stevens K."/>
            <person name="Taylor K."/>
            <person name="Taylor R.G."/>
            <person name="Tivey A."/>
            <person name="Walsh S.V."/>
            <person name="Warren T."/>
            <person name="Whitehead S."/>
            <person name="Woodward J.R."/>
            <person name="Volckaert G."/>
            <person name="Aert R."/>
            <person name="Robben J."/>
            <person name="Grymonprez B."/>
            <person name="Weltjens I."/>
            <person name="Vanstreels E."/>
            <person name="Rieger M."/>
            <person name="Schaefer M."/>
            <person name="Mueller-Auer S."/>
            <person name="Gabel C."/>
            <person name="Fuchs M."/>
            <person name="Duesterhoeft A."/>
            <person name="Fritzc C."/>
            <person name="Holzer E."/>
            <person name="Moestl D."/>
            <person name="Hilbert H."/>
            <person name="Borzym K."/>
            <person name="Langer I."/>
            <person name="Beck A."/>
            <person name="Lehrach H."/>
            <person name="Reinhardt R."/>
            <person name="Pohl T.M."/>
            <person name="Eger P."/>
            <person name="Zimmermann W."/>
            <person name="Wedler H."/>
            <person name="Wambutt R."/>
            <person name="Purnelle B."/>
            <person name="Goffeau A."/>
            <person name="Cadieu E."/>
            <person name="Dreano S."/>
            <person name="Gloux S."/>
            <person name="Lelaure V."/>
            <person name="Mottier S."/>
            <person name="Galibert F."/>
            <person name="Aves S.J."/>
            <person name="Xiang Z."/>
            <person name="Hunt C."/>
            <person name="Moore K."/>
            <person name="Hurst S.M."/>
            <person name="Lucas M."/>
            <person name="Rochet M."/>
            <person name="Gaillardin C."/>
            <person name="Tallada V.A."/>
            <person name="Garzon A."/>
            <person name="Thode G."/>
            <person name="Daga R.R."/>
            <person name="Cruzado L."/>
            <person name="Jimenez J."/>
            <person name="Sanchez M."/>
            <person name="del Rey F."/>
            <person name="Benito J."/>
            <person name="Dominguez A."/>
            <person name="Revuelta J.L."/>
            <person name="Moreno S."/>
            <person name="Armstrong J."/>
            <person name="Forsburg S.L."/>
            <person name="Cerutti L."/>
            <person name="Lowe T."/>
            <person name="McCombie W.R."/>
            <person name="Paulsen I."/>
            <person name="Potashkin J."/>
            <person name="Shpakovski G.V."/>
            <person name="Ussery D."/>
            <person name="Barrell B.G."/>
            <person name="Nurse P."/>
        </authorList>
    </citation>
    <scope>NUCLEOTIDE SEQUENCE [LARGE SCALE GENOMIC DNA]</scope>
    <source>
        <strain>972 / ATCC 24843</strain>
    </source>
</reference>
<dbReference type="EC" id="2.5.1.18"/>
<dbReference type="EMBL" id="AF395117">
    <property type="protein sequence ID" value="AAK77864.1"/>
    <property type="molecule type" value="Genomic_DNA"/>
</dbReference>
<dbReference type="EMBL" id="CU329672">
    <property type="protein sequence ID" value="CAA19067.1"/>
    <property type="molecule type" value="Genomic_DNA"/>
</dbReference>
<dbReference type="PIR" id="T41660">
    <property type="entry name" value="T41660"/>
</dbReference>
<dbReference type="RefSeq" id="NP_588517.1">
    <property type="nucleotide sequence ID" value="NM_001023506.2"/>
</dbReference>
<dbReference type="SMR" id="O59827"/>
<dbReference type="BioGRID" id="276159">
    <property type="interactions" value="3"/>
</dbReference>
<dbReference type="FunCoup" id="O59827">
    <property type="interactions" value="139"/>
</dbReference>
<dbReference type="STRING" id="284812.O59827"/>
<dbReference type="iPTMnet" id="O59827"/>
<dbReference type="PaxDb" id="4896-SPCC965.07c.1"/>
<dbReference type="EnsemblFungi" id="SPCC965.07c.1">
    <property type="protein sequence ID" value="SPCC965.07c.1:pep"/>
    <property type="gene ID" value="SPCC965.07c"/>
</dbReference>
<dbReference type="GeneID" id="2539601"/>
<dbReference type="KEGG" id="spo:2539601"/>
<dbReference type="PomBase" id="SPCC965.07c">
    <property type="gene designation" value="gst2"/>
</dbReference>
<dbReference type="VEuPathDB" id="FungiDB:SPCC965.07c"/>
<dbReference type="eggNOG" id="KOG0867">
    <property type="taxonomic scope" value="Eukaryota"/>
</dbReference>
<dbReference type="HOGENOM" id="CLU_011226_14_2_1"/>
<dbReference type="InParanoid" id="O59827"/>
<dbReference type="OMA" id="ATQYAKH"/>
<dbReference type="PhylomeDB" id="O59827"/>
<dbReference type="PRO" id="PR:O59827"/>
<dbReference type="Proteomes" id="UP000002485">
    <property type="component" value="Chromosome III"/>
</dbReference>
<dbReference type="GO" id="GO:0005737">
    <property type="term" value="C:cytoplasm"/>
    <property type="evidence" value="ECO:0000314"/>
    <property type="project" value="PomBase"/>
</dbReference>
<dbReference type="GO" id="GO:0005829">
    <property type="term" value="C:cytosol"/>
    <property type="evidence" value="ECO:0007005"/>
    <property type="project" value="PomBase"/>
</dbReference>
<dbReference type="GO" id="GO:0005634">
    <property type="term" value="C:nucleus"/>
    <property type="evidence" value="ECO:0000314"/>
    <property type="project" value="PomBase"/>
</dbReference>
<dbReference type="GO" id="GO:0004364">
    <property type="term" value="F:glutathione transferase activity"/>
    <property type="evidence" value="ECO:0000315"/>
    <property type="project" value="PomBase"/>
</dbReference>
<dbReference type="GO" id="GO:1990748">
    <property type="term" value="P:cellular detoxification"/>
    <property type="evidence" value="ECO:0000303"/>
    <property type="project" value="PomBase"/>
</dbReference>
<dbReference type="CDD" id="cd10293">
    <property type="entry name" value="GST_C_Ure2p"/>
    <property type="match status" value="1"/>
</dbReference>
<dbReference type="CDD" id="cd03048">
    <property type="entry name" value="GST_N_Ure2p_like"/>
    <property type="match status" value="1"/>
</dbReference>
<dbReference type="FunFam" id="1.20.1050.130:FF:000016">
    <property type="entry name" value="Glutathione S-transferase 1"/>
    <property type="match status" value="1"/>
</dbReference>
<dbReference type="FunFam" id="3.40.30.10:FF:000039">
    <property type="entry name" value="Glutathione S-transferase domain"/>
    <property type="match status" value="1"/>
</dbReference>
<dbReference type="Gene3D" id="1.20.1050.130">
    <property type="match status" value="1"/>
</dbReference>
<dbReference type="InterPro" id="IPR010987">
    <property type="entry name" value="Glutathione-S-Trfase_C-like"/>
</dbReference>
<dbReference type="InterPro" id="IPR036282">
    <property type="entry name" value="Glutathione-S-Trfase_C_sf"/>
</dbReference>
<dbReference type="InterPro" id="IPR004045">
    <property type="entry name" value="Glutathione_S-Trfase_N"/>
</dbReference>
<dbReference type="InterPro" id="IPR004046">
    <property type="entry name" value="GST_C"/>
</dbReference>
<dbReference type="InterPro" id="IPR036249">
    <property type="entry name" value="Thioredoxin-like_sf"/>
</dbReference>
<dbReference type="PANTHER" id="PTHR44051">
    <property type="entry name" value="GLUTATHIONE S-TRANSFERASE-RELATED"/>
    <property type="match status" value="1"/>
</dbReference>
<dbReference type="PANTHER" id="PTHR44051:SF3">
    <property type="entry name" value="TRANSCRIPTIONAL REGULATOR URE2"/>
    <property type="match status" value="1"/>
</dbReference>
<dbReference type="Pfam" id="PF00043">
    <property type="entry name" value="GST_C"/>
    <property type="match status" value="1"/>
</dbReference>
<dbReference type="Pfam" id="PF02798">
    <property type="entry name" value="GST_N"/>
    <property type="match status" value="1"/>
</dbReference>
<dbReference type="SFLD" id="SFLDG01151">
    <property type="entry name" value="Main.2:_Nu-like"/>
    <property type="match status" value="1"/>
</dbReference>
<dbReference type="SFLD" id="SFLDG00358">
    <property type="entry name" value="Main_(cytGST)"/>
    <property type="match status" value="1"/>
</dbReference>
<dbReference type="SUPFAM" id="SSF47616">
    <property type="entry name" value="GST C-terminal domain-like"/>
    <property type="match status" value="1"/>
</dbReference>
<dbReference type="SUPFAM" id="SSF52833">
    <property type="entry name" value="Thioredoxin-like"/>
    <property type="match status" value="1"/>
</dbReference>
<dbReference type="PROSITE" id="PS50405">
    <property type="entry name" value="GST_CTER"/>
    <property type="match status" value="1"/>
</dbReference>
<dbReference type="PROSITE" id="PS50404">
    <property type="entry name" value="GST_NTER"/>
    <property type="match status" value="1"/>
</dbReference>
<comment type="function">
    <text evidence="1">Involved in the oxidative stress response and detoxification.</text>
</comment>
<comment type="catalytic activity">
    <reaction>
        <text>RX + glutathione = an S-substituted glutathione + a halide anion + H(+)</text>
        <dbReference type="Rhea" id="RHEA:16437"/>
        <dbReference type="ChEBI" id="CHEBI:15378"/>
        <dbReference type="ChEBI" id="CHEBI:16042"/>
        <dbReference type="ChEBI" id="CHEBI:17792"/>
        <dbReference type="ChEBI" id="CHEBI:57925"/>
        <dbReference type="ChEBI" id="CHEBI:90779"/>
        <dbReference type="EC" id="2.5.1.18"/>
    </reaction>
</comment>
<comment type="induction">
    <text evidence="1">By O-dinitrobenzene.</text>
</comment>
<comment type="similarity">
    <text evidence="2">Belongs to the GST superfamily.</text>
</comment>
<name>GST2_SCHPO</name>
<evidence type="ECO:0000269" key="1">
    <source>
    </source>
</evidence>
<evidence type="ECO:0000305" key="2"/>